<keyword id="KW-0067">ATP-binding</keyword>
<keyword id="KW-0418">Kinase</keyword>
<keyword id="KW-0460">Magnesium</keyword>
<keyword id="KW-0479">Metal-binding</keyword>
<keyword id="KW-0547">Nucleotide-binding</keyword>
<keyword id="KW-0784">Thiamine biosynthesis</keyword>
<keyword id="KW-0808">Transferase</keyword>
<feature type="chain" id="PRO_1000198126" description="Hydroxyethylthiazole kinase">
    <location>
        <begin position="1"/>
        <end position="262"/>
    </location>
</feature>
<feature type="binding site" evidence="1">
    <location>
        <position position="50"/>
    </location>
    <ligand>
        <name>substrate</name>
    </ligand>
</feature>
<feature type="binding site" evidence="1">
    <location>
        <position position="125"/>
    </location>
    <ligand>
        <name>ATP</name>
        <dbReference type="ChEBI" id="CHEBI:30616"/>
    </ligand>
</feature>
<feature type="binding site" evidence="1">
    <location>
        <position position="171"/>
    </location>
    <ligand>
        <name>ATP</name>
        <dbReference type="ChEBI" id="CHEBI:30616"/>
    </ligand>
</feature>
<feature type="binding site" evidence="1">
    <location>
        <position position="198"/>
    </location>
    <ligand>
        <name>substrate</name>
    </ligand>
</feature>
<sequence length="262" mass="27408">MQPDLLSRKTAALTLQKFHTLSPLTHCMTNDVVQTFTANTLLALGASPAMVIETEEASQFAAVASALLINVGTLTQARAHAMRAAVVHAKRVKTPWTLDPVAVGSLDYRRHFCTELLSLNPDAIRGNASEIMALAGVSNSGRGVDSTDVVANALPAAVMLAQETGAVVVVTGEVDYVTDGRRTVGVGGGDPLMTKVVGTGCALSAVVAACCALPGDRLLNVASACSWMKQAGERAIVRSQGPGTFVPYFLDALWQMTQEVEA</sequence>
<name>THIM_ESCF3</name>
<protein>
    <recommendedName>
        <fullName evidence="1">Hydroxyethylthiazole kinase</fullName>
        <ecNumber evidence="1">2.7.1.50</ecNumber>
    </recommendedName>
    <alternativeName>
        <fullName evidence="1">4-methyl-5-beta-hydroxyethylthiazole kinase</fullName>
        <shortName evidence="1">TH kinase</shortName>
        <shortName evidence="1">Thz kinase</shortName>
    </alternativeName>
</protein>
<evidence type="ECO:0000255" key="1">
    <source>
        <dbReference type="HAMAP-Rule" id="MF_00228"/>
    </source>
</evidence>
<gene>
    <name evidence="1" type="primary">thiM</name>
    <name type="ordered locus">EFER_2190</name>
</gene>
<comment type="function">
    <text evidence="1">Catalyzes the phosphorylation of the hydroxyl group of 4-methyl-5-beta-hydroxyethylthiazole (THZ).</text>
</comment>
<comment type="catalytic activity">
    <reaction evidence="1">
        <text>5-(2-hydroxyethyl)-4-methylthiazole + ATP = 4-methyl-5-(2-phosphooxyethyl)-thiazole + ADP + H(+)</text>
        <dbReference type="Rhea" id="RHEA:24212"/>
        <dbReference type="ChEBI" id="CHEBI:15378"/>
        <dbReference type="ChEBI" id="CHEBI:17957"/>
        <dbReference type="ChEBI" id="CHEBI:30616"/>
        <dbReference type="ChEBI" id="CHEBI:58296"/>
        <dbReference type="ChEBI" id="CHEBI:456216"/>
        <dbReference type="EC" id="2.7.1.50"/>
    </reaction>
</comment>
<comment type="cofactor">
    <cofactor evidence="1">
        <name>Mg(2+)</name>
        <dbReference type="ChEBI" id="CHEBI:18420"/>
    </cofactor>
</comment>
<comment type="pathway">
    <text evidence="1">Cofactor biosynthesis; thiamine diphosphate biosynthesis; 4-methyl-5-(2-phosphoethyl)-thiazole from 5-(2-hydroxyethyl)-4-methylthiazole: step 1/1.</text>
</comment>
<comment type="similarity">
    <text evidence="1">Belongs to the Thz kinase family.</text>
</comment>
<dbReference type="EC" id="2.7.1.50" evidence="1"/>
<dbReference type="EMBL" id="CU928158">
    <property type="protein sequence ID" value="CAQ89692.1"/>
    <property type="molecule type" value="Genomic_DNA"/>
</dbReference>
<dbReference type="RefSeq" id="WP_001182180.1">
    <property type="nucleotide sequence ID" value="NC_011740.1"/>
</dbReference>
<dbReference type="SMR" id="B7LV66"/>
<dbReference type="GeneID" id="75056776"/>
<dbReference type="KEGG" id="efe:EFER_2190"/>
<dbReference type="HOGENOM" id="CLU_019943_0_1_6"/>
<dbReference type="OrthoDB" id="8909021at2"/>
<dbReference type="UniPathway" id="UPA00060">
    <property type="reaction ID" value="UER00139"/>
</dbReference>
<dbReference type="Proteomes" id="UP000000745">
    <property type="component" value="Chromosome"/>
</dbReference>
<dbReference type="GO" id="GO:0005524">
    <property type="term" value="F:ATP binding"/>
    <property type="evidence" value="ECO:0007669"/>
    <property type="project" value="UniProtKB-UniRule"/>
</dbReference>
<dbReference type="GO" id="GO:0004417">
    <property type="term" value="F:hydroxyethylthiazole kinase activity"/>
    <property type="evidence" value="ECO:0007669"/>
    <property type="project" value="UniProtKB-UniRule"/>
</dbReference>
<dbReference type="GO" id="GO:0000287">
    <property type="term" value="F:magnesium ion binding"/>
    <property type="evidence" value="ECO:0007669"/>
    <property type="project" value="UniProtKB-UniRule"/>
</dbReference>
<dbReference type="GO" id="GO:0009228">
    <property type="term" value="P:thiamine biosynthetic process"/>
    <property type="evidence" value="ECO:0007669"/>
    <property type="project" value="UniProtKB-KW"/>
</dbReference>
<dbReference type="GO" id="GO:0009229">
    <property type="term" value="P:thiamine diphosphate biosynthetic process"/>
    <property type="evidence" value="ECO:0007669"/>
    <property type="project" value="UniProtKB-UniRule"/>
</dbReference>
<dbReference type="CDD" id="cd01170">
    <property type="entry name" value="THZ_kinase"/>
    <property type="match status" value="1"/>
</dbReference>
<dbReference type="FunFam" id="3.40.1190.20:FF:000015">
    <property type="entry name" value="Hydroxyethylthiazole kinase"/>
    <property type="match status" value="1"/>
</dbReference>
<dbReference type="Gene3D" id="3.40.1190.20">
    <property type="match status" value="1"/>
</dbReference>
<dbReference type="HAMAP" id="MF_00228">
    <property type="entry name" value="Thz_kinase"/>
    <property type="match status" value="1"/>
</dbReference>
<dbReference type="InterPro" id="IPR000417">
    <property type="entry name" value="Hyethyz_kinase"/>
</dbReference>
<dbReference type="InterPro" id="IPR029056">
    <property type="entry name" value="Ribokinase-like"/>
</dbReference>
<dbReference type="NCBIfam" id="NF006830">
    <property type="entry name" value="PRK09355.1"/>
    <property type="match status" value="1"/>
</dbReference>
<dbReference type="NCBIfam" id="TIGR00694">
    <property type="entry name" value="thiM"/>
    <property type="match status" value="1"/>
</dbReference>
<dbReference type="Pfam" id="PF02110">
    <property type="entry name" value="HK"/>
    <property type="match status" value="1"/>
</dbReference>
<dbReference type="PIRSF" id="PIRSF000513">
    <property type="entry name" value="Thz_kinase"/>
    <property type="match status" value="1"/>
</dbReference>
<dbReference type="PRINTS" id="PR01099">
    <property type="entry name" value="HYETHTZKNASE"/>
</dbReference>
<dbReference type="SUPFAM" id="SSF53613">
    <property type="entry name" value="Ribokinase-like"/>
    <property type="match status" value="1"/>
</dbReference>
<organism>
    <name type="scientific">Escherichia fergusonii (strain ATCC 35469 / DSM 13698 / CCUG 18766 / IAM 14443 / JCM 21226 / LMG 7866 / NBRC 102419 / NCTC 12128 / CDC 0568-73)</name>
    <dbReference type="NCBI Taxonomy" id="585054"/>
    <lineage>
        <taxon>Bacteria</taxon>
        <taxon>Pseudomonadati</taxon>
        <taxon>Pseudomonadota</taxon>
        <taxon>Gammaproteobacteria</taxon>
        <taxon>Enterobacterales</taxon>
        <taxon>Enterobacteriaceae</taxon>
        <taxon>Escherichia</taxon>
    </lineage>
</organism>
<reference key="1">
    <citation type="journal article" date="2009" name="PLoS Genet.">
        <title>Organised genome dynamics in the Escherichia coli species results in highly diverse adaptive paths.</title>
        <authorList>
            <person name="Touchon M."/>
            <person name="Hoede C."/>
            <person name="Tenaillon O."/>
            <person name="Barbe V."/>
            <person name="Baeriswyl S."/>
            <person name="Bidet P."/>
            <person name="Bingen E."/>
            <person name="Bonacorsi S."/>
            <person name="Bouchier C."/>
            <person name="Bouvet O."/>
            <person name="Calteau A."/>
            <person name="Chiapello H."/>
            <person name="Clermont O."/>
            <person name="Cruveiller S."/>
            <person name="Danchin A."/>
            <person name="Diard M."/>
            <person name="Dossat C."/>
            <person name="Karoui M.E."/>
            <person name="Frapy E."/>
            <person name="Garry L."/>
            <person name="Ghigo J.M."/>
            <person name="Gilles A.M."/>
            <person name="Johnson J."/>
            <person name="Le Bouguenec C."/>
            <person name="Lescat M."/>
            <person name="Mangenot S."/>
            <person name="Martinez-Jehanne V."/>
            <person name="Matic I."/>
            <person name="Nassif X."/>
            <person name="Oztas S."/>
            <person name="Petit M.A."/>
            <person name="Pichon C."/>
            <person name="Rouy Z."/>
            <person name="Ruf C.S."/>
            <person name="Schneider D."/>
            <person name="Tourret J."/>
            <person name="Vacherie B."/>
            <person name="Vallenet D."/>
            <person name="Medigue C."/>
            <person name="Rocha E.P.C."/>
            <person name="Denamur E."/>
        </authorList>
    </citation>
    <scope>NUCLEOTIDE SEQUENCE [LARGE SCALE GENOMIC DNA]</scope>
    <source>
        <strain>ATCC 35469 / DSM 13698 / BCRC 15582 / CCUG 18766 / IAM 14443 / JCM 21226 / LMG 7866 / NBRC 102419 / NCTC 12128 / CDC 0568-73</strain>
    </source>
</reference>
<proteinExistence type="inferred from homology"/>
<accession>B7LV66</accession>